<dbReference type="EMBL" id="AL123456">
    <property type="protein sequence ID" value="CCP45639.1"/>
    <property type="molecule type" value="Genomic_DNA"/>
</dbReference>
<dbReference type="PIR" id="A70694">
    <property type="entry name" value="A70694"/>
</dbReference>
<dbReference type="RefSeq" id="NP_217354.1">
    <property type="nucleotide sequence ID" value="NC_000962.3"/>
</dbReference>
<dbReference type="RefSeq" id="WP_003414508.1">
    <property type="nucleotide sequence ID" value="NZ_NVQJ01000006.1"/>
</dbReference>
<dbReference type="SMR" id="P9WHJ7"/>
<dbReference type="FunCoup" id="P9WHJ7">
    <property type="interactions" value="17"/>
</dbReference>
<dbReference type="STRING" id="83332.Rv2838c"/>
<dbReference type="PaxDb" id="83332-Rv2838c"/>
<dbReference type="DNASU" id="888923"/>
<dbReference type="GeneID" id="888923"/>
<dbReference type="KEGG" id="mtu:Rv2838c"/>
<dbReference type="KEGG" id="mtv:RVBD_2838c"/>
<dbReference type="TubercuList" id="Rv2838c"/>
<dbReference type="eggNOG" id="COG0858">
    <property type="taxonomic scope" value="Bacteria"/>
</dbReference>
<dbReference type="InParanoid" id="P9WHJ7"/>
<dbReference type="OrthoDB" id="307788at2"/>
<dbReference type="PhylomeDB" id="P9WHJ7"/>
<dbReference type="Proteomes" id="UP000001584">
    <property type="component" value="Chromosome"/>
</dbReference>
<dbReference type="GO" id="GO:0005829">
    <property type="term" value="C:cytosol"/>
    <property type="evidence" value="ECO:0000318"/>
    <property type="project" value="GO_Central"/>
</dbReference>
<dbReference type="GO" id="GO:0043024">
    <property type="term" value="F:ribosomal small subunit binding"/>
    <property type="evidence" value="ECO:0000318"/>
    <property type="project" value="GO_Central"/>
</dbReference>
<dbReference type="GO" id="GO:0030490">
    <property type="term" value="P:maturation of SSU-rRNA"/>
    <property type="evidence" value="ECO:0007669"/>
    <property type="project" value="UniProtKB-UniRule"/>
</dbReference>
<dbReference type="GO" id="GO:0042254">
    <property type="term" value="P:ribosome biogenesis"/>
    <property type="evidence" value="ECO:0000318"/>
    <property type="project" value="GO_Central"/>
</dbReference>
<dbReference type="FunFam" id="3.30.300.20:FF:000018">
    <property type="entry name" value="Ribosome-binding factor A"/>
    <property type="match status" value="1"/>
</dbReference>
<dbReference type="Gene3D" id="3.30.300.20">
    <property type="match status" value="1"/>
</dbReference>
<dbReference type="HAMAP" id="MF_00003">
    <property type="entry name" value="RbfA"/>
    <property type="match status" value="1"/>
</dbReference>
<dbReference type="InterPro" id="IPR015946">
    <property type="entry name" value="KH_dom-like_a/b"/>
</dbReference>
<dbReference type="InterPro" id="IPR000238">
    <property type="entry name" value="RbfA"/>
</dbReference>
<dbReference type="InterPro" id="IPR023799">
    <property type="entry name" value="RbfA_dom_sf"/>
</dbReference>
<dbReference type="InterPro" id="IPR020053">
    <property type="entry name" value="Ribosome-bd_factorA_CS"/>
</dbReference>
<dbReference type="NCBIfam" id="TIGR00082">
    <property type="entry name" value="rbfA"/>
    <property type="match status" value="1"/>
</dbReference>
<dbReference type="PANTHER" id="PTHR33515">
    <property type="entry name" value="RIBOSOME-BINDING FACTOR A, CHLOROPLASTIC-RELATED"/>
    <property type="match status" value="1"/>
</dbReference>
<dbReference type="PANTHER" id="PTHR33515:SF1">
    <property type="entry name" value="RIBOSOME-BINDING FACTOR A, CHLOROPLASTIC-RELATED"/>
    <property type="match status" value="1"/>
</dbReference>
<dbReference type="Pfam" id="PF02033">
    <property type="entry name" value="RBFA"/>
    <property type="match status" value="1"/>
</dbReference>
<dbReference type="SUPFAM" id="SSF89919">
    <property type="entry name" value="Ribosome-binding factor A, RbfA"/>
    <property type="match status" value="1"/>
</dbReference>
<dbReference type="PROSITE" id="PS01319">
    <property type="entry name" value="RBFA"/>
    <property type="match status" value="1"/>
</dbReference>
<organism>
    <name type="scientific">Mycobacterium tuberculosis (strain ATCC 25618 / H37Rv)</name>
    <dbReference type="NCBI Taxonomy" id="83332"/>
    <lineage>
        <taxon>Bacteria</taxon>
        <taxon>Bacillati</taxon>
        <taxon>Actinomycetota</taxon>
        <taxon>Actinomycetes</taxon>
        <taxon>Mycobacteriales</taxon>
        <taxon>Mycobacteriaceae</taxon>
        <taxon>Mycobacterium</taxon>
        <taxon>Mycobacterium tuberculosis complex</taxon>
    </lineage>
</organism>
<accession>P9WHJ7</accession>
<accession>L0TCE1</accession>
<accession>P65964</accession>
<accession>P71614</accession>
<gene>
    <name evidence="1" type="primary">rbfA</name>
    <name type="ordered locus">Rv2838c</name>
    <name type="ORF">MTCY16B7.04</name>
</gene>
<evidence type="ECO:0000255" key="1">
    <source>
        <dbReference type="HAMAP-Rule" id="MF_00003"/>
    </source>
</evidence>
<evidence type="ECO:0000256" key="2">
    <source>
        <dbReference type="SAM" id="MobiDB-lite"/>
    </source>
</evidence>
<name>RBFA_MYCTU</name>
<comment type="function">
    <text evidence="1">One of several proteins that assist in the late maturation steps of the functional core of the 30S ribosomal subunit. Associates with free 30S ribosomal subunits (but not with 30S subunits that are part of 70S ribosomes or polysomes). Required for efficient processing of 16S rRNA. May interact with the 5'-terminal helix region of 16S rRNA.</text>
</comment>
<comment type="subunit">
    <text evidence="1">Monomer. Binds 30S ribosomal subunits, but not 50S ribosomal subunits or 70S ribosomes.</text>
</comment>
<comment type="subcellular location">
    <subcellularLocation>
        <location evidence="1">Cytoplasm</location>
    </subcellularLocation>
</comment>
<comment type="similarity">
    <text evidence="1">Belongs to the RbfA family.</text>
</comment>
<sequence length="183" mass="18998">MADAARARRLAKRIAAIVASAIEYEIKDPGLAGVTITDAKVTADLHDATVYYTVMGRTLHDEPNCAGAAAALERAKGVLRTKVGAGTGVRFTPTLTFTLDTISDSVHRMDELLARARAADADLARVRVGAKPAGEADPYRDNGSVAQSPAPGGLGIRTSDGPEAVEAPLTCGGDTGDDDRPKE</sequence>
<keyword id="KW-0963">Cytoplasm</keyword>
<keyword id="KW-1185">Reference proteome</keyword>
<keyword id="KW-0690">Ribosome biogenesis</keyword>
<reference key="1">
    <citation type="journal article" date="1998" name="Nature">
        <title>Deciphering the biology of Mycobacterium tuberculosis from the complete genome sequence.</title>
        <authorList>
            <person name="Cole S.T."/>
            <person name="Brosch R."/>
            <person name="Parkhill J."/>
            <person name="Garnier T."/>
            <person name="Churcher C.M."/>
            <person name="Harris D.E."/>
            <person name="Gordon S.V."/>
            <person name="Eiglmeier K."/>
            <person name="Gas S."/>
            <person name="Barry C.E. III"/>
            <person name="Tekaia F."/>
            <person name="Badcock K."/>
            <person name="Basham D."/>
            <person name="Brown D."/>
            <person name="Chillingworth T."/>
            <person name="Connor R."/>
            <person name="Davies R.M."/>
            <person name="Devlin K."/>
            <person name="Feltwell T."/>
            <person name="Gentles S."/>
            <person name="Hamlin N."/>
            <person name="Holroyd S."/>
            <person name="Hornsby T."/>
            <person name="Jagels K."/>
            <person name="Krogh A."/>
            <person name="McLean J."/>
            <person name="Moule S."/>
            <person name="Murphy L.D."/>
            <person name="Oliver S."/>
            <person name="Osborne J."/>
            <person name="Quail M.A."/>
            <person name="Rajandream M.A."/>
            <person name="Rogers J."/>
            <person name="Rutter S."/>
            <person name="Seeger K."/>
            <person name="Skelton S."/>
            <person name="Squares S."/>
            <person name="Squares R."/>
            <person name="Sulston J.E."/>
            <person name="Taylor K."/>
            <person name="Whitehead S."/>
            <person name="Barrell B.G."/>
        </authorList>
    </citation>
    <scope>NUCLEOTIDE SEQUENCE [LARGE SCALE GENOMIC DNA]</scope>
    <source>
        <strain>ATCC 25618 / H37Rv</strain>
    </source>
</reference>
<reference key="2">
    <citation type="journal article" date="2011" name="Mol. Cell. Proteomics">
        <title>Proteogenomic analysis of Mycobacterium tuberculosis by high resolution mass spectrometry.</title>
        <authorList>
            <person name="Kelkar D.S."/>
            <person name="Kumar D."/>
            <person name="Kumar P."/>
            <person name="Balakrishnan L."/>
            <person name="Muthusamy B."/>
            <person name="Yadav A.K."/>
            <person name="Shrivastava P."/>
            <person name="Marimuthu A."/>
            <person name="Anand S."/>
            <person name="Sundaram H."/>
            <person name="Kingsbury R."/>
            <person name="Harsha H.C."/>
            <person name="Nair B."/>
            <person name="Prasad T.S."/>
            <person name="Chauhan D.S."/>
            <person name="Katoch K."/>
            <person name="Katoch V.M."/>
            <person name="Kumar P."/>
            <person name="Chaerkady R."/>
            <person name="Ramachandran S."/>
            <person name="Dash D."/>
            <person name="Pandey A."/>
        </authorList>
    </citation>
    <scope>IDENTIFICATION BY MASS SPECTROMETRY [LARGE SCALE ANALYSIS]</scope>
    <source>
        <strain>ATCC 25618 / H37Rv</strain>
    </source>
</reference>
<feature type="chain" id="PRO_0000102698" description="Ribosome-binding factor A">
    <location>
        <begin position="1"/>
        <end position="183"/>
    </location>
</feature>
<feature type="region of interest" description="Disordered" evidence="2">
    <location>
        <begin position="132"/>
        <end position="183"/>
    </location>
</feature>
<proteinExistence type="evidence at protein level"/>
<protein>
    <recommendedName>
        <fullName evidence="1">Ribosome-binding factor A</fullName>
    </recommendedName>
</protein>